<name>PUR7_BACMK</name>
<feature type="chain" id="PRO_1000095964" description="Phosphoribosylaminoimidazole-succinocarboxamide synthase">
    <location>
        <begin position="1"/>
        <end position="239"/>
    </location>
</feature>
<reference key="1">
    <citation type="journal article" date="2008" name="Chem. Biol. Interact.">
        <title>Extending the Bacillus cereus group genomics to putative food-borne pathogens of different toxicity.</title>
        <authorList>
            <person name="Lapidus A."/>
            <person name="Goltsman E."/>
            <person name="Auger S."/>
            <person name="Galleron N."/>
            <person name="Segurens B."/>
            <person name="Dossat C."/>
            <person name="Land M.L."/>
            <person name="Broussolle V."/>
            <person name="Brillard J."/>
            <person name="Guinebretiere M.-H."/>
            <person name="Sanchis V."/>
            <person name="Nguen-the C."/>
            <person name="Lereclus D."/>
            <person name="Richardson P."/>
            <person name="Wincker P."/>
            <person name="Weissenbach J."/>
            <person name="Ehrlich S.D."/>
            <person name="Sorokin A."/>
        </authorList>
    </citation>
    <scope>NUCLEOTIDE SEQUENCE [LARGE SCALE GENOMIC DNA]</scope>
    <source>
        <strain>KBAB4</strain>
    </source>
</reference>
<comment type="catalytic activity">
    <reaction evidence="1">
        <text>5-amino-1-(5-phospho-D-ribosyl)imidazole-4-carboxylate + L-aspartate + ATP = (2S)-2-[5-amino-1-(5-phospho-beta-D-ribosyl)imidazole-4-carboxamido]succinate + ADP + phosphate + 2 H(+)</text>
        <dbReference type="Rhea" id="RHEA:22628"/>
        <dbReference type="ChEBI" id="CHEBI:15378"/>
        <dbReference type="ChEBI" id="CHEBI:29991"/>
        <dbReference type="ChEBI" id="CHEBI:30616"/>
        <dbReference type="ChEBI" id="CHEBI:43474"/>
        <dbReference type="ChEBI" id="CHEBI:58443"/>
        <dbReference type="ChEBI" id="CHEBI:77657"/>
        <dbReference type="ChEBI" id="CHEBI:456216"/>
        <dbReference type="EC" id="6.3.2.6"/>
    </reaction>
</comment>
<comment type="pathway">
    <text evidence="1">Purine metabolism; IMP biosynthesis via de novo pathway; 5-amino-1-(5-phospho-D-ribosyl)imidazole-4-carboxamide from 5-amino-1-(5-phospho-D-ribosyl)imidazole-4-carboxylate: step 1/2.</text>
</comment>
<comment type="similarity">
    <text evidence="1">Belongs to the SAICAR synthetase family.</text>
</comment>
<proteinExistence type="inferred from homology"/>
<gene>
    <name evidence="1" type="primary">purC</name>
    <name type="ordered locus">BcerKBAB4_0272</name>
</gene>
<keyword id="KW-0067">ATP-binding</keyword>
<keyword id="KW-0436">Ligase</keyword>
<keyword id="KW-0547">Nucleotide-binding</keyword>
<keyword id="KW-0658">Purine biosynthesis</keyword>
<accession>A9VRE8</accession>
<evidence type="ECO:0000255" key="1">
    <source>
        <dbReference type="HAMAP-Rule" id="MF_00137"/>
    </source>
</evidence>
<protein>
    <recommendedName>
        <fullName evidence="1">Phosphoribosylaminoimidazole-succinocarboxamide synthase</fullName>
        <ecNumber evidence="1">6.3.2.6</ecNumber>
    </recommendedName>
    <alternativeName>
        <fullName evidence="1">SAICAR synthetase</fullName>
    </alternativeName>
</protein>
<dbReference type="EC" id="6.3.2.6" evidence="1"/>
<dbReference type="EMBL" id="CP000903">
    <property type="protein sequence ID" value="ABY41538.1"/>
    <property type="molecule type" value="Genomic_DNA"/>
</dbReference>
<dbReference type="RefSeq" id="WP_002029482.1">
    <property type="nucleotide sequence ID" value="NC_010184.1"/>
</dbReference>
<dbReference type="SMR" id="A9VRE8"/>
<dbReference type="GeneID" id="66264614"/>
<dbReference type="KEGG" id="bwe:BcerKBAB4_0272"/>
<dbReference type="eggNOG" id="COG0152">
    <property type="taxonomic scope" value="Bacteria"/>
</dbReference>
<dbReference type="HOGENOM" id="CLU_061495_2_0_9"/>
<dbReference type="UniPathway" id="UPA00074">
    <property type="reaction ID" value="UER00131"/>
</dbReference>
<dbReference type="Proteomes" id="UP000002154">
    <property type="component" value="Chromosome"/>
</dbReference>
<dbReference type="GO" id="GO:0005524">
    <property type="term" value="F:ATP binding"/>
    <property type="evidence" value="ECO:0007669"/>
    <property type="project" value="UniProtKB-KW"/>
</dbReference>
<dbReference type="GO" id="GO:0004639">
    <property type="term" value="F:phosphoribosylaminoimidazolesuccinocarboxamide synthase activity"/>
    <property type="evidence" value="ECO:0007669"/>
    <property type="project" value="UniProtKB-UniRule"/>
</dbReference>
<dbReference type="GO" id="GO:0006189">
    <property type="term" value="P:'de novo' IMP biosynthetic process"/>
    <property type="evidence" value="ECO:0007669"/>
    <property type="project" value="UniProtKB-UniRule"/>
</dbReference>
<dbReference type="GO" id="GO:0009236">
    <property type="term" value="P:cobalamin biosynthetic process"/>
    <property type="evidence" value="ECO:0007669"/>
    <property type="project" value="InterPro"/>
</dbReference>
<dbReference type="CDD" id="cd01415">
    <property type="entry name" value="SAICAR_synt_PurC"/>
    <property type="match status" value="1"/>
</dbReference>
<dbReference type="FunFam" id="3.30.200.20:FF:000189">
    <property type="entry name" value="Phosphoribosylaminoimidazole-succinocarboxamide synthase"/>
    <property type="match status" value="1"/>
</dbReference>
<dbReference type="FunFam" id="3.30.470.20:FF:000006">
    <property type="entry name" value="Phosphoribosylaminoimidazole-succinocarboxamide synthase"/>
    <property type="match status" value="1"/>
</dbReference>
<dbReference type="Gene3D" id="3.30.470.20">
    <property type="entry name" value="ATP-grasp fold, B domain"/>
    <property type="match status" value="1"/>
</dbReference>
<dbReference type="Gene3D" id="3.30.200.20">
    <property type="entry name" value="Phosphorylase Kinase, domain 1"/>
    <property type="match status" value="1"/>
</dbReference>
<dbReference type="HAMAP" id="MF_00137">
    <property type="entry name" value="SAICAR_synth"/>
    <property type="match status" value="1"/>
</dbReference>
<dbReference type="InterPro" id="IPR028923">
    <property type="entry name" value="SAICAR_synt/ADE2_N"/>
</dbReference>
<dbReference type="InterPro" id="IPR033934">
    <property type="entry name" value="SAICAR_synt_PurC"/>
</dbReference>
<dbReference type="InterPro" id="IPR001636">
    <property type="entry name" value="SAICAR_synth"/>
</dbReference>
<dbReference type="InterPro" id="IPR050089">
    <property type="entry name" value="SAICAR_synthetase"/>
</dbReference>
<dbReference type="InterPro" id="IPR018236">
    <property type="entry name" value="SAICAR_synthetase_CS"/>
</dbReference>
<dbReference type="NCBIfam" id="TIGR00081">
    <property type="entry name" value="purC"/>
    <property type="match status" value="1"/>
</dbReference>
<dbReference type="PANTHER" id="PTHR43599">
    <property type="entry name" value="MULTIFUNCTIONAL PROTEIN ADE2"/>
    <property type="match status" value="1"/>
</dbReference>
<dbReference type="PANTHER" id="PTHR43599:SF3">
    <property type="entry name" value="SI:DKEY-6E2.2"/>
    <property type="match status" value="1"/>
</dbReference>
<dbReference type="Pfam" id="PF01259">
    <property type="entry name" value="SAICAR_synt"/>
    <property type="match status" value="1"/>
</dbReference>
<dbReference type="SUPFAM" id="SSF56104">
    <property type="entry name" value="SAICAR synthase-like"/>
    <property type="match status" value="1"/>
</dbReference>
<dbReference type="PROSITE" id="PS01057">
    <property type="entry name" value="SAICAR_SYNTHETASE_1"/>
    <property type="match status" value="1"/>
</dbReference>
<dbReference type="PROSITE" id="PS01058">
    <property type="entry name" value="SAICAR_SYNTHETASE_2"/>
    <property type="match status" value="1"/>
</dbReference>
<sequence>MQKLELLYEGKAKRIYRTEAADMVWVEYKDSATAFNGEKKATITGKGRLNNEITTLLFRKLQEVGIKTHFVEKLSDTEQLVKKVSIIPLEVVTRNVIAGSLSKRLGMEEGTALTTPIVEFYYKDDDLGDPLVTEDHIRLLNVATPEQVSVLRDAALQINQVMIEHFASCRVRLVDFKLEFGVTEEGEIILADEISPDTCRLWDETSNEKFDKDVFRRDLGNLTEAYEEILKRLGGASHV</sequence>
<organism>
    <name type="scientific">Bacillus mycoides (strain KBAB4)</name>
    <name type="common">Bacillus weihenstephanensis</name>
    <dbReference type="NCBI Taxonomy" id="315730"/>
    <lineage>
        <taxon>Bacteria</taxon>
        <taxon>Bacillati</taxon>
        <taxon>Bacillota</taxon>
        <taxon>Bacilli</taxon>
        <taxon>Bacillales</taxon>
        <taxon>Bacillaceae</taxon>
        <taxon>Bacillus</taxon>
        <taxon>Bacillus cereus group</taxon>
    </lineage>
</organism>